<protein>
    <recommendedName>
        <fullName evidence="1">Enolase-phosphatase E1</fullName>
        <ecNumber evidence="1">3.1.3.77</ecNumber>
    </recommendedName>
    <alternativeName>
        <fullName evidence="1">2,3-diketo-5-methylthio-1-phosphopentane phosphatase</fullName>
    </alternativeName>
</protein>
<organism>
    <name type="scientific">Candida tropicalis (strain ATCC MYA-3404 / T1)</name>
    <name type="common">Yeast</name>
    <dbReference type="NCBI Taxonomy" id="294747"/>
    <lineage>
        <taxon>Eukaryota</taxon>
        <taxon>Fungi</taxon>
        <taxon>Dikarya</taxon>
        <taxon>Ascomycota</taxon>
        <taxon>Saccharomycotina</taxon>
        <taxon>Pichiomycetes</taxon>
        <taxon>Debaryomycetaceae</taxon>
        <taxon>Candida/Lodderomyces clade</taxon>
        <taxon>Candida</taxon>
    </lineage>
</organism>
<evidence type="ECO:0000255" key="1">
    <source>
        <dbReference type="HAMAP-Rule" id="MF_03117"/>
    </source>
</evidence>
<sequence>MTIDTVILDIEGTVCPITFVKDTLFPYFLTKLPSILSSIEFPLSTSSSTNDDPIIQILKQLPESITISNESVFSYLKNLVDQDIKDPILKSLQGYIWEKGYEIGDLKAPIYKDSIKFIENFNKKIYIYSSGSIKAQILLFGHAEKDQESINLNPFLKGYFDITTAGFKNKSESYIKILNEINKSNDPSSVLFLSDNVNEVKSAIESGMNSYIVIRPGNAPLSDDDKSTYKTIHSLDELTL</sequence>
<proteinExistence type="inferred from homology"/>
<gene>
    <name evidence="1" type="primary">UTR4</name>
    <name type="ORF">CTRG_01277</name>
</gene>
<accession>C5M5Z6</accession>
<comment type="function">
    <text evidence="1">Bifunctional enzyme that catalyzes the enolization of 2,3-diketo-5-methylthiopentyl-1-phosphate (DK-MTP-1-P) into the intermediate 2-hydroxy-3-keto-5-methylthiopentenyl-1-phosphate (HK-MTPenyl-1-P), which is then dephosphorylated to form the acireductone 1,2-dihydroxy-3-keto-5-methylthiopentene (DHK-MTPene).</text>
</comment>
<comment type="catalytic activity">
    <reaction evidence="1">
        <text>5-methylsulfanyl-2,3-dioxopentyl phosphate + H2O = 1,2-dihydroxy-5-(methylsulfanyl)pent-1-en-3-one + phosphate</text>
        <dbReference type="Rhea" id="RHEA:21700"/>
        <dbReference type="ChEBI" id="CHEBI:15377"/>
        <dbReference type="ChEBI" id="CHEBI:43474"/>
        <dbReference type="ChEBI" id="CHEBI:49252"/>
        <dbReference type="ChEBI" id="CHEBI:58828"/>
        <dbReference type="EC" id="3.1.3.77"/>
    </reaction>
</comment>
<comment type="cofactor">
    <cofactor evidence="1">
        <name>Mg(2+)</name>
        <dbReference type="ChEBI" id="CHEBI:18420"/>
    </cofactor>
    <text evidence="1">Binds 1 Mg(2+) ion per subunit.</text>
</comment>
<comment type="pathway">
    <text evidence="1">Amino-acid biosynthesis; L-methionine biosynthesis via salvage pathway; L-methionine from S-methyl-5-thio-alpha-D-ribose 1-phosphate: step 3/6.</text>
</comment>
<comment type="pathway">
    <text evidence="1">Amino-acid biosynthesis; L-methionine biosynthesis via salvage pathway; L-methionine from S-methyl-5-thio-alpha-D-ribose 1-phosphate: step 4/6.</text>
</comment>
<comment type="subunit">
    <text evidence="1">Monomer.</text>
</comment>
<comment type="subcellular location">
    <subcellularLocation>
        <location evidence="1">Cytoplasm</location>
    </subcellularLocation>
    <subcellularLocation>
        <location evidence="1">Nucleus</location>
    </subcellularLocation>
</comment>
<comment type="similarity">
    <text evidence="1">Belongs to the HAD-like hydrolase superfamily. MasA/MtnC family.</text>
</comment>
<reference key="1">
    <citation type="journal article" date="2009" name="Nature">
        <title>Evolution of pathogenicity and sexual reproduction in eight Candida genomes.</title>
        <authorList>
            <person name="Butler G."/>
            <person name="Rasmussen M.D."/>
            <person name="Lin M.F."/>
            <person name="Santos M.A.S."/>
            <person name="Sakthikumar S."/>
            <person name="Munro C.A."/>
            <person name="Rheinbay E."/>
            <person name="Grabherr M."/>
            <person name="Forche A."/>
            <person name="Reedy J.L."/>
            <person name="Agrafioti I."/>
            <person name="Arnaud M.B."/>
            <person name="Bates S."/>
            <person name="Brown A.J.P."/>
            <person name="Brunke S."/>
            <person name="Costanzo M.C."/>
            <person name="Fitzpatrick D.A."/>
            <person name="de Groot P.W.J."/>
            <person name="Harris D."/>
            <person name="Hoyer L.L."/>
            <person name="Hube B."/>
            <person name="Klis F.M."/>
            <person name="Kodira C."/>
            <person name="Lennard N."/>
            <person name="Logue M.E."/>
            <person name="Martin R."/>
            <person name="Neiman A.M."/>
            <person name="Nikolaou E."/>
            <person name="Quail M.A."/>
            <person name="Quinn J."/>
            <person name="Santos M.C."/>
            <person name="Schmitzberger F.F."/>
            <person name="Sherlock G."/>
            <person name="Shah P."/>
            <person name="Silverstein K.A.T."/>
            <person name="Skrzypek M.S."/>
            <person name="Soll D."/>
            <person name="Staggs R."/>
            <person name="Stansfield I."/>
            <person name="Stumpf M.P.H."/>
            <person name="Sudbery P.E."/>
            <person name="Srikantha T."/>
            <person name="Zeng Q."/>
            <person name="Berman J."/>
            <person name="Berriman M."/>
            <person name="Heitman J."/>
            <person name="Gow N.A.R."/>
            <person name="Lorenz M.C."/>
            <person name="Birren B.W."/>
            <person name="Kellis M."/>
            <person name="Cuomo C.A."/>
        </authorList>
    </citation>
    <scope>NUCLEOTIDE SEQUENCE [LARGE SCALE GENOMIC DNA]</scope>
    <source>
        <strain>ATCC MYA-3404 / T1</strain>
    </source>
</reference>
<name>ENOPH_CANTT</name>
<keyword id="KW-0028">Amino-acid biosynthesis</keyword>
<keyword id="KW-0963">Cytoplasm</keyword>
<keyword id="KW-0378">Hydrolase</keyword>
<keyword id="KW-0460">Magnesium</keyword>
<keyword id="KW-0479">Metal-binding</keyword>
<keyword id="KW-0486">Methionine biosynthesis</keyword>
<keyword id="KW-0539">Nucleus</keyword>
<keyword id="KW-1185">Reference proteome</keyword>
<feature type="chain" id="PRO_0000393996" description="Enolase-phosphatase E1">
    <location>
        <begin position="1"/>
        <end position="240"/>
    </location>
</feature>
<feature type="binding site" evidence="1">
    <location>
        <position position="9"/>
    </location>
    <ligand>
        <name>Mg(2+)</name>
        <dbReference type="ChEBI" id="CHEBI:18420"/>
    </ligand>
</feature>
<feature type="binding site" evidence="1">
    <location>
        <position position="11"/>
    </location>
    <ligand>
        <name>Mg(2+)</name>
        <dbReference type="ChEBI" id="CHEBI:18420"/>
    </ligand>
</feature>
<feature type="binding site" evidence="1">
    <location>
        <begin position="129"/>
        <end position="130"/>
    </location>
    <ligand>
        <name>substrate</name>
    </ligand>
</feature>
<feature type="binding site" evidence="1">
    <location>
        <position position="168"/>
    </location>
    <ligand>
        <name>substrate</name>
    </ligand>
</feature>
<feature type="binding site" evidence="1">
    <location>
        <position position="195"/>
    </location>
    <ligand>
        <name>Mg(2+)</name>
        <dbReference type="ChEBI" id="CHEBI:18420"/>
    </ligand>
</feature>
<dbReference type="EC" id="3.1.3.77" evidence="1"/>
<dbReference type="EMBL" id="GG692396">
    <property type="protein sequence ID" value="EER34416.1"/>
    <property type="molecule type" value="Genomic_DNA"/>
</dbReference>
<dbReference type="RefSeq" id="XP_002546971.1">
    <property type="nucleotide sequence ID" value="XM_002546925.1"/>
</dbReference>
<dbReference type="SMR" id="C5M5Z6"/>
<dbReference type="STRING" id="294747.C5M5Z6"/>
<dbReference type="MoonProt" id="C5M5Z6"/>
<dbReference type="EnsemblFungi" id="CTRG_01277-t43_1">
    <property type="protein sequence ID" value="CTRG_01277-t43_1-p1"/>
    <property type="gene ID" value="CTRG_01277"/>
</dbReference>
<dbReference type="GeneID" id="8301002"/>
<dbReference type="KEGG" id="ctp:CTRG_01277"/>
<dbReference type="VEuPathDB" id="FungiDB:CTRG_01277"/>
<dbReference type="eggNOG" id="KOG2630">
    <property type="taxonomic scope" value="Eukaryota"/>
</dbReference>
<dbReference type="HOGENOM" id="CLU_023273_1_1_1"/>
<dbReference type="OrthoDB" id="272500at2759"/>
<dbReference type="UniPathway" id="UPA00904">
    <property type="reaction ID" value="UER00876"/>
</dbReference>
<dbReference type="UniPathway" id="UPA00904">
    <property type="reaction ID" value="UER00877"/>
</dbReference>
<dbReference type="Proteomes" id="UP000002037">
    <property type="component" value="Unassembled WGS sequence"/>
</dbReference>
<dbReference type="GO" id="GO:0005737">
    <property type="term" value="C:cytoplasm"/>
    <property type="evidence" value="ECO:0007669"/>
    <property type="project" value="UniProtKB-SubCell"/>
</dbReference>
<dbReference type="GO" id="GO:0005634">
    <property type="term" value="C:nucleus"/>
    <property type="evidence" value="ECO:0007669"/>
    <property type="project" value="UniProtKB-SubCell"/>
</dbReference>
<dbReference type="GO" id="GO:0043874">
    <property type="term" value="F:acireductone synthase activity"/>
    <property type="evidence" value="ECO:0007669"/>
    <property type="project" value="UniProtKB-EC"/>
</dbReference>
<dbReference type="GO" id="GO:0000287">
    <property type="term" value="F:magnesium ion binding"/>
    <property type="evidence" value="ECO:0007669"/>
    <property type="project" value="UniProtKB-UniRule"/>
</dbReference>
<dbReference type="GO" id="GO:0019509">
    <property type="term" value="P:L-methionine salvage from methylthioadenosine"/>
    <property type="evidence" value="ECO:0007669"/>
    <property type="project" value="UniProtKB-UniRule"/>
</dbReference>
<dbReference type="Gene3D" id="1.10.720.60">
    <property type="match status" value="1"/>
</dbReference>
<dbReference type="Gene3D" id="3.40.50.1000">
    <property type="entry name" value="HAD superfamily/HAD-like"/>
    <property type="match status" value="1"/>
</dbReference>
<dbReference type="HAMAP" id="MF_03117">
    <property type="entry name" value="Salvage_MtnC_euk"/>
    <property type="match status" value="1"/>
</dbReference>
<dbReference type="InterPro" id="IPR023943">
    <property type="entry name" value="Enolase-ppase_E1"/>
</dbReference>
<dbReference type="InterPro" id="IPR027511">
    <property type="entry name" value="ENOPH1_eukaryotes"/>
</dbReference>
<dbReference type="InterPro" id="IPR036412">
    <property type="entry name" value="HAD-like_sf"/>
</dbReference>
<dbReference type="InterPro" id="IPR023214">
    <property type="entry name" value="HAD_sf"/>
</dbReference>
<dbReference type="NCBIfam" id="TIGR01691">
    <property type="entry name" value="enolase-ppase"/>
    <property type="match status" value="1"/>
</dbReference>
<dbReference type="PANTHER" id="PTHR20371">
    <property type="entry name" value="ENOLASE-PHOSPHATASE E1"/>
    <property type="match status" value="1"/>
</dbReference>
<dbReference type="PANTHER" id="PTHR20371:SF1">
    <property type="entry name" value="ENOLASE-PHOSPHATASE E1"/>
    <property type="match status" value="1"/>
</dbReference>
<dbReference type="Pfam" id="PF00702">
    <property type="entry name" value="Hydrolase"/>
    <property type="match status" value="1"/>
</dbReference>
<dbReference type="SFLD" id="SFLDG01133">
    <property type="entry name" value="C1.5.4:_Enolase-phosphatase_Li"/>
    <property type="match status" value="1"/>
</dbReference>
<dbReference type="SFLD" id="SFLDG01129">
    <property type="entry name" value="C1.5:_HAD__Beta-PGM__Phosphata"/>
    <property type="match status" value="1"/>
</dbReference>
<dbReference type="SUPFAM" id="SSF56784">
    <property type="entry name" value="HAD-like"/>
    <property type="match status" value="1"/>
</dbReference>